<comment type="function">
    <text evidence="1">Required during biogenesis of c-type cytochromes (cytochrome c6 and cytochrome f) at the step of heme attachment.</text>
</comment>
<comment type="subunit">
    <text evidence="1">May interact with Ccs1.</text>
</comment>
<comment type="subcellular location">
    <subcellularLocation>
        <location evidence="1">Plastid</location>
        <location evidence="1">Chloroplast thylakoid membrane</location>
        <topology evidence="1">Multi-pass membrane protein</topology>
    </subcellularLocation>
</comment>
<comment type="similarity">
    <text evidence="1">Belongs to the CcmF/CycK/Ccl1/NrfE/CcsA family.</text>
</comment>
<geneLocation type="chloroplast"/>
<accession>A4QJG5</accession>
<feature type="chain" id="PRO_0000353727" description="Cytochrome c biogenesis protein CcsA">
    <location>
        <begin position="1"/>
        <end position="328"/>
    </location>
</feature>
<feature type="transmembrane region" description="Helical" evidence="1">
    <location>
        <begin position="13"/>
        <end position="33"/>
    </location>
</feature>
<feature type="transmembrane region" description="Helical" evidence="1">
    <location>
        <begin position="46"/>
        <end position="66"/>
    </location>
</feature>
<feature type="transmembrane region" description="Helical" evidence="1">
    <location>
        <begin position="73"/>
        <end position="93"/>
    </location>
</feature>
<feature type="transmembrane region" description="Helical" evidence="1">
    <location>
        <begin position="101"/>
        <end position="121"/>
    </location>
</feature>
<feature type="transmembrane region" description="Helical" evidence="1">
    <location>
        <begin position="146"/>
        <end position="166"/>
    </location>
</feature>
<feature type="transmembrane region" description="Helical" evidence="1">
    <location>
        <begin position="234"/>
        <end position="254"/>
    </location>
</feature>
<feature type="transmembrane region" description="Helical" evidence="1">
    <location>
        <begin position="263"/>
        <end position="283"/>
    </location>
</feature>
<feature type="transmembrane region" description="Helical" evidence="1">
    <location>
        <begin position="295"/>
        <end position="315"/>
    </location>
</feature>
<keyword id="KW-0150">Chloroplast</keyword>
<keyword id="KW-0201">Cytochrome c-type biogenesis</keyword>
<keyword id="KW-0472">Membrane</keyword>
<keyword id="KW-0934">Plastid</keyword>
<keyword id="KW-0793">Thylakoid</keyword>
<keyword id="KW-0812">Transmembrane</keyword>
<keyword id="KW-1133">Transmembrane helix</keyword>
<proteinExistence type="inferred from homology"/>
<sequence>MIFSILEHILTHISFSVVLIVMTIYFLTLLVNLDESIGFYDSSDKGIVITFFSITGFLFTRWIYSGHFPLSNLYESLIFLSWAFSIIHMVSYFNKKKKNNLNAITAPSAIFIQGFATSGLLNKMPQSAILVPALQSQWLMMHVSMMVLGYGALLCGSLLSIALLVITFRKVGPFFYKKNKKKTKLLTDFFSFGVLYYINERNSIFLRQNINLSFSRNYYRYQLIEQLDYWSYRIISLGFLFLTMGILSGAVWANETWGSYWNWDPKETWAFITWTIFAIYLHIKTKKNGRGINSAIVASIGFLVIWICYFGVNLLGIGLHSYGSFTSN</sequence>
<protein>
    <recommendedName>
        <fullName evidence="1">Cytochrome c biogenesis protein CcsA</fullName>
    </recommendedName>
</protein>
<evidence type="ECO:0000255" key="1">
    <source>
        <dbReference type="HAMAP-Rule" id="MF_01391"/>
    </source>
</evidence>
<reference key="1">
    <citation type="submission" date="2007-03" db="EMBL/GenBank/DDBJ databases">
        <title>Sequencing analysis of Aethionema coridifolium chloroplast DNA.</title>
        <authorList>
            <person name="Hosouchi T."/>
            <person name="Tsuruoka H."/>
            <person name="Kotani H."/>
        </authorList>
    </citation>
    <scope>NUCLEOTIDE SEQUENCE [LARGE SCALE GENOMIC DNA]</scope>
</reference>
<dbReference type="EMBL" id="AP009366">
    <property type="protein sequence ID" value="BAF49820.1"/>
    <property type="molecule type" value="Genomic_DNA"/>
</dbReference>
<dbReference type="RefSeq" id="YP_001122995.1">
    <property type="nucleotide sequence ID" value="NC_009265.1"/>
</dbReference>
<dbReference type="SMR" id="A4QJG5"/>
<dbReference type="GeneID" id="4968668"/>
<dbReference type="GO" id="GO:0009535">
    <property type="term" value="C:chloroplast thylakoid membrane"/>
    <property type="evidence" value="ECO:0007669"/>
    <property type="project" value="UniProtKB-SubCell"/>
</dbReference>
<dbReference type="GO" id="GO:0005886">
    <property type="term" value="C:plasma membrane"/>
    <property type="evidence" value="ECO:0007669"/>
    <property type="project" value="TreeGrafter"/>
</dbReference>
<dbReference type="GO" id="GO:0020037">
    <property type="term" value="F:heme binding"/>
    <property type="evidence" value="ECO:0007669"/>
    <property type="project" value="InterPro"/>
</dbReference>
<dbReference type="GO" id="GO:0017004">
    <property type="term" value="P:cytochrome complex assembly"/>
    <property type="evidence" value="ECO:0007669"/>
    <property type="project" value="UniProtKB-UniRule"/>
</dbReference>
<dbReference type="HAMAP" id="MF_01391">
    <property type="entry name" value="CytC_CcsA"/>
    <property type="match status" value="1"/>
</dbReference>
<dbReference type="InterPro" id="IPR002541">
    <property type="entry name" value="Cyt_c_assembly"/>
</dbReference>
<dbReference type="InterPro" id="IPR017562">
    <property type="entry name" value="Cyt_c_biogenesis_CcsA"/>
</dbReference>
<dbReference type="InterPro" id="IPR045062">
    <property type="entry name" value="Cyt_c_biogenesis_CcsA/CcmC"/>
</dbReference>
<dbReference type="NCBIfam" id="TIGR03144">
    <property type="entry name" value="cytochr_II_ccsB"/>
    <property type="match status" value="1"/>
</dbReference>
<dbReference type="PANTHER" id="PTHR30071:SF1">
    <property type="entry name" value="CYTOCHROME B_B6 PROTEIN-RELATED"/>
    <property type="match status" value="1"/>
</dbReference>
<dbReference type="PANTHER" id="PTHR30071">
    <property type="entry name" value="HEME EXPORTER PROTEIN C"/>
    <property type="match status" value="1"/>
</dbReference>
<dbReference type="Pfam" id="PF01578">
    <property type="entry name" value="Cytochrom_C_asm"/>
    <property type="match status" value="1"/>
</dbReference>
<gene>
    <name evidence="1" type="primary">ccsA</name>
</gene>
<organism>
    <name type="scientific">Aethionema cordifolium</name>
    <name type="common">Lebanon stonecress</name>
    <dbReference type="NCBI Taxonomy" id="434059"/>
    <lineage>
        <taxon>Eukaryota</taxon>
        <taxon>Viridiplantae</taxon>
        <taxon>Streptophyta</taxon>
        <taxon>Embryophyta</taxon>
        <taxon>Tracheophyta</taxon>
        <taxon>Spermatophyta</taxon>
        <taxon>Magnoliopsida</taxon>
        <taxon>eudicotyledons</taxon>
        <taxon>Gunneridae</taxon>
        <taxon>Pentapetalae</taxon>
        <taxon>rosids</taxon>
        <taxon>malvids</taxon>
        <taxon>Brassicales</taxon>
        <taxon>Brassicaceae</taxon>
        <taxon>Aethionemeae</taxon>
        <taxon>Aethionema</taxon>
    </lineage>
</organism>
<name>CCSA_AETCO</name>